<accession>Q9BY77</accession>
<accession>A8K6F8</accession>
<accession>A8K6V9</accession>
<accession>Q009A7</accession>
<accession>Q5H972</accession>
<accession>Q6PGN6</accession>
<accession>Q7Z6Z0</accession>
<accession>Q9NSP5</accession>
<accession>Q9NSP6</accession>
<organism>
    <name type="scientific">Homo sapiens</name>
    <name type="common">Human</name>
    <dbReference type="NCBI Taxonomy" id="9606"/>
    <lineage>
        <taxon>Eukaryota</taxon>
        <taxon>Metazoa</taxon>
        <taxon>Chordata</taxon>
        <taxon>Craniata</taxon>
        <taxon>Vertebrata</taxon>
        <taxon>Euteleostomi</taxon>
        <taxon>Mammalia</taxon>
        <taxon>Eutheria</taxon>
        <taxon>Euarchontoglires</taxon>
        <taxon>Primates</taxon>
        <taxon>Haplorrhini</taxon>
        <taxon>Catarrhini</taxon>
        <taxon>Hominidae</taxon>
        <taxon>Homo</taxon>
    </lineage>
</organism>
<keyword id="KW-0007">Acetylation</keyword>
<keyword id="KW-0025">Alternative splicing</keyword>
<keyword id="KW-0963">Cytoplasm</keyword>
<keyword id="KW-0903">Direct protein sequencing</keyword>
<keyword id="KW-1017">Isopeptide bond</keyword>
<keyword id="KW-0488">Methylation</keyword>
<keyword id="KW-0509">mRNA transport</keyword>
<keyword id="KW-0539">Nucleus</keyword>
<keyword id="KW-0597">Phosphoprotein</keyword>
<keyword id="KW-1267">Proteomics identification</keyword>
<keyword id="KW-1185">Reference proteome</keyword>
<keyword id="KW-0694">RNA-binding</keyword>
<keyword id="KW-0810">Translation regulation</keyword>
<keyword id="KW-0813">Transport</keyword>
<keyword id="KW-0832">Ubl conjugation</keyword>
<evidence type="ECO:0000255" key="1">
    <source>
        <dbReference type="PROSITE-ProRule" id="PRU00176"/>
    </source>
</evidence>
<evidence type="ECO:0000256" key="2">
    <source>
        <dbReference type="SAM" id="MobiDB-lite"/>
    </source>
</evidence>
<evidence type="ECO:0000269" key="3">
    <source>
    </source>
</evidence>
<evidence type="ECO:0000269" key="4">
    <source>
    </source>
</evidence>
<evidence type="ECO:0000269" key="5">
    <source>
    </source>
</evidence>
<evidence type="ECO:0000269" key="6">
    <source>
    </source>
</evidence>
<evidence type="ECO:0000269" key="7">
    <source>
    </source>
</evidence>
<evidence type="ECO:0000269" key="8">
    <source ref="8"/>
</evidence>
<evidence type="ECO:0000303" key="9">
    <source>
    </source>
</evidence>
<evidence type="ECO:0000303" key="10">
    <source>
    </source>
</evidence>
<evidence type="ECO:0000303" key="11">
    <source>
    </source>
</evidence>
<evidence type="ECO:0000305" key="12"/>
<evidence type="ECO:0007744" key="13">
    <source>
    </source>
</evidence>
<evidence type="ECO:0007744" key="14">
    <source>
    </source>
</evidence>
<evidence type="ECO:0007744" key="15">
    <source>
    </source>
</evidence>
<evidence type="ECO:0007744" key="16">
    <source>
    </source>
</evidence>
<evidence type="ECO:0007744" key="17">
    <source>
    </source>
</evidence>
<evidence type="ECO:0007744" key="18">
    <source>
    </source>
</evidence>
<evidence type="ECO:0007744" key="19">
    <source>
    </source>
</evidence>
<evidence type="ECO:0007744" key="20">
    <source>
    </source>
</evidence>
<sequence length="421" mass="46089">MADISLDELIRKRGAAAKGRLNARPGVGGVRSRVGIQQGLLSQSTRTATFQQRFDARQKIGLSDARLKLGVKDAREKLLQKDARFRIKGKVQDAREMLNSRKQQTTVPQKPRQVADAREKISLKRSSPAAFINPPIGTVTPALKLTKTIQVPQQKAMAPLHPHPAGMRINVVNNHQAKQNLYDLDEDDDGIASVPTKQMKFAASGGFLHHMAGLSSSKLSMSKALPLTKVVQNDAYTAPALPSSIRTKALTNMSRTLVNKEEPPKELPAAEPVLSPLEGTKMTVNNLHPRVTEEDIVELFCVCGALKRARLVHPGVAEVVFVKKDDAITAYKKYNNRCLDGQPMKCNLHMNGNVITSDQPILLRLSDSPSMKKESELPRRVNSASSSNPPAEVDPDTILKALFKSSGASVTTQPTEFKIKL</sequence>
<feature type="initiator methionine" description="Removed" evidence="8 14 15 16">
    <location>
        <position position="1"/>
    </location>
</feature>
<feature type="chain" id="PRO_0000081722" description="Polymerase delta-interacting protein 3">
    <location>
        <begin position="2"/>
        <end position="421"/>
    </location>
</feature>
<feature type="domain" description="RRM" evidence="1">
    <location>
        <begin position="280"/>
        <end position="351"/>
    </location>
</feature>
<feature type="region of interest" description="Disordered" evidence="2">
    <location>
        <begin position="370"/>
        <end position="393"/>
    </location>
</feature>
<feature type="compositionally biased region" description="Basic and acidic residues" evidence="2">
    <location>
        <begin position="370"/>
        <end position="379"/>
    </location>
</feature>
<feature type="modified residue" description="N-acetylalanine" evidence="8 14 15 16">
    <location>
        <position position="2"/>
    </location>
</feature>
<feature type="modified residue" description="Phosphoserine" evidence="14 17">
    <location>
        <position position="5"/>
    </location>
</feature>
<feature type="modified residue" description="Omega-N-methylarginine" evidence="18">
    <location>
        <position position="33"/>
    </location>
</feature>
<feature type="modified residue" description="Phosphoserine" evidence="17">
    <location>
        <position position="44"/>
    </location>
</feature>
<feature type="modified residue" description="Phosphoserine" evidence="4 14 17">
    <location>
        <position position="127"/>
    </location>
</feature>
<feature type="modified residue" description="Phosphothreonine" evidence="13">
    <location>
        <position position="140"/>
    </location>
</feature>
<feature type="modified residue" description="Phosphoserine" evidence="17">
    <location>
        <position position="204"/>
    </location>
</feature>
<feature type="modified residue" description="Phosphoserine" evidence="17">
    <location>
        <position position="215"/>
    </location>
</feature>
<feature type="modified residue" description="Phosphoserine" evidence="17">
    <location>
        <position position="217"/>
    </location>
</feature>
<feature type="modified residue" description="Phosphoserine" evidence="17">
    <location>
        <position position="244"/>
    </location>
</feature>
<feature type="modified residue" description="Phosphoserine" evidence="4 14 17">
    <location>
        <position position="275"/>
    </location>
</feature>
<feature type="modified residue" description="Phosphoserine; by RPS6KB1" evidence="4">
    <location>
        <position position="383"/>
    </location>
</feature>
<feature type="modified residue" description="Phosphoserine; by RPS6KB1" evidence="4">
    <location>
        <position position="385"/>
    </location>
</feature>
<feature type="cross-link" description="Glycyl lysine isopeptide (Lys-Gly) (interchain with G-Cter in SUMO2)" evidence="20">
    <location>
        <position position="200"/>
    </location>
</feature>
<feature type="cross-link" description="Glycyl lysine isopeptide (Lys-Gly) (interchain with G-Cter in SUMO2)" evidence="20">
    <location>
        <position position="223"/>
    </location>
</feature>
<feature type="cross-link" description="Glycyl lysine isopeptide (Lys-Gly) (interchain with G-Cter in SUMO2)" evidence="20">
    <location>
        <position position="248"/>
    </location>
</feature>
<feature type="cross-link" description="Glycyl lysine isopeptide (Lys-Gly) (interchain with G-Cter in SUMO2)" evidence="19 20">
    <location>
        <position position="372"/>
    </location>
</feature>
<feature type="cross-link" description="Glycyl lysine isopeptide (Lys-Gly) (interchain with G-Cter in SUMO2)" evidence="20">
    <location>
        <position position="418"/>
    </location>
</feature>
<feature type="splice variant" id="VSP_011056" description="In isoform 2." evidence="9 10 11">
    <location>
        <begin position="151"/>
        <end position="179"/>
    </location>
</feature>
<feature type="mutagenesis site" description="Reduces in vitro phosphorylation by RPS6KB1. Abolishes in vitro phosphorylation by RPS6KB1; when associated with A-385." evidence="4">
    <original>S</original>
    <variation>A</variation>
    <location>
        <position position="383"/>
    </location>
</feature>
<feature type="mutagenesis site" description="Reduces in vitro phosphorylation by RPS6KB1. Reduces in vitro phosphorylation by RPS6KB1; when associated with A-383." evidence="4">
    <original>S</original>
    <variation>A</variation>
    <location>
        <position position="385"/>
    </location>
</feature>
<proteinExistence type="evidence at protein level"/>
<gene>
    <name type="primary">POLDIP3</name>
    <name type="synonym">KIAA1649</name>
    <name type="synonym">PDIP46</name>
</gene>
<protein>
    <recommendedName>
        <fullName>Polymerase delta-interacting protein 3</fullName>
    </recommendedName>
    <alternativeName>
        <fullName>46 kDa DNA polymerase delta interaction protein</fullName>
        <shortName>p46</shortName>
    </alternativeName>
    <alternativeName>
        <fullName>S6K1 Aly/REF-like target</fullName>
        <shortName>SKAR</shortName>
    </alternativeName>
</protein>
<dbReference type="EMBL" id="AY422990">
    <property type="protein sequence ID" value="AAQ94604.1"/>
    <property type="molecule type" value="Genomic_DNA"/>
</dbReference>
<dbReference type="EMBL" id="AB055760">
    <property type="protein sequence ID" value="BAB33368.2"/>
    <property type="status" value="ALT_INIT"/>
    <property type="molecule type" value="mRNA"/>
</dbReference>
<dbReference type="EMBL" id="AL160111">
    <property type="protein sequence ID" value="CAB77058.1"/>
    <property type="molecule type" value="mRNA"/>
</dbReference>
<dbReference type="EMBL" id="AL160112">
    <property type="protein sequence ID" value="CAB77059.1"/>
    <property type="molecule type" value="mRNA"/>
</dbReference>
<dbReference type="EMBL" id="CR456456">
    <property type="protein sequence ID" value="CAG30342.1"/>
    <property type="molecule type" value="mRNA"/>
</dbReference>
<dbReference type="EMBL" id="AK291623">
    <property type="protein sequence ID" value="BAF84312.1"/>
    <property type="molecule type" value="mRNA"/>
</dbReference>
<dbReference type="EMBL" id="AK291774">
    <property type="protein sequence ID" value="BAF84463.1"/>
    <property type="molecule type" value="mRNA"/>
</dbReference>
<dbReference type="EMBL" id="Z93241">
    <property type="status" value="NOT_ANNOTATED_CDS"/>
    <property type="molecule type" value="Genomic_DNA"/>
</dbReference>
<dbReference type="EMBL" id="BC049840">
    <property type="protein sequence ID" value="AAH49840.1"/>
    <property type="molecule type" value="mRNA"/>
</dbReference>
<dbReference type="EMBL" id="BC056912">
    <property type="protein sequence ID" value="AAH56912.2"/>
    <property type="molecule type" value="mRNA"/>
</dbReference>
<dbReference type="EMBL" id="BC095411">
    <property type="protein sequence ID" value="AAH95411.1"/>
    <property type="molecule type" value="mRNA"/>
</dbReference>
<dbReference type="EMBL" id="DQ887818">
    <property type="protein sequence ID" value="ABI74675.1"/>
    <property type="molecule type" value="mRNA"/>
</dbReference>
<dbReference type="CCDS" id="CCDS14038.1">
    <molecule id="Q9BY77-1"/>
</dbReference>
<dbReference type="CCDS" id="CCDS14039.1">
    <molecule id="Q9BY77-2"/>
</dbReference>
<dbReference type="RefSeq" id="NP_115687.2">
    <molecule id="Q9BY77-1"/>
    <property type="nucleotide sequence ID" value="NM_032311.4"/>
</dbReference>
<dbReference type="RefSeq" id="NP_835237.1">
    <molecule id="Q9BY77-2"/>
    <property type="nucleotide sequence ID" value="NM_178136.3"/>
</dbReference>
<dbReference type="SMR" id="Q9BY77"/>
<dbReference type="BioGRID" id="123998">
    <property type="interactions" value="283"/>
</dbReference>
<dbReference type="ComplexPortal" id="CPX-2488">
    <property type="entry name" value="TREX transcription-export complex, DX39B variant"/>
</dbReference>
<dbReference type="ComplexPortal" id="CPX-7261">
    <property type="entry name" value="TREX transcription-export complex, DX39A variant"/>
</dbReference>
<dbReference type="FunCoup" id="Q9BY77">
    <property type="interactions" value="4836"/>
</dbReference>
<dbReference type="IntAct" id="Q9BY77">
    <property type="interactions" value="123"/>
</dbReference>
<dbReference type="MINT" id="Q9BY77"/>
<dbReference type="STRING" id="9606.ENSP00000397927"/>
<dbReference type="GlyGen" id="Q9BY77">
    <property type="glycosylation" value="1 site, 1 O-linked glycan (1 site)"/>
</dbReference>
<dbReference type="iPTMnet" id="Q9BY77"/>
<dbReference type="PhosphoSitePlus" id="Q9BY77"/>
<dbReference type="SwissPalm" id="Q9BY77"/>
<dbReference type="BioMuta" id="POLDIP3"/>
<dbReference type="DMDM" id="50403796"/>
<dbReference type="jPOST" id="Q9BY77"/>
<dbReference type="MassIVE" id="Q9BY77"/>
<dbReference type="PaxDb" id="9606-ENSP00000397927"/>
<dbReference type="PeptideAtlas" id="Q9BY77"/>
<dbReference type="ProteomicsDB" id="79598">
    <molecule id="Q9BY77-1"/>
</dbReference>
<dbReference type="ProteomicsDB" id="79599">
    <molecule id="Q9BY77-2"/>
</dbReference>
<dbReference type="Pumba" id="Q9BY77"/>
<dbReference type="Antibodypedia" id="13265">
    <property type="antibodies" value="254 antibodies from 30 providers"/>
</dbReference>
<dbReference type="DNASU" id="84271"/>
<dbReference type="Ensembl" id="ENST00000252115.10">
    <molecule id="Q9BY77-1"/>
    <property type="protein sequence ID" value="ENSP00000252115.5"/>
    <property type="gene ID" value="ENSG00000100227.19"/>
</dbReference>
<dbReference type="Ensembl" id="ENST00000348657.6">
    <molecule id="Q9BY77-2"/>
    <property type="protein sequence ID" value="ENSP00000252116.5"/>
    <property type="gene ID" value="ENSG00000100227.19"/>
</dbReference>
<dbReference type="GeneID" id="84271"/>
<dbReference type="KEGG" id="hsa:84271"/>
<dbReference type="MANE-Select" id="ENST00000252115.10">
    <property type="protein sequence ID" value="ENSP00000252115.5"/>
    <property type="RefSeq nucleotide sequence ID" value="NM_032311.5"/>
    <property type="RefSeq protein sequence ID" value="NP_115687.2"/>
</dbReference>
<dbReference type="UCSC" id="uc003bcu.4">
    <molecule id="Q9BY77-1"/>
    <property type="organism name" value="human"/>
</dbReference>
<dbReference type="AGR" id="HGNC:23782"/>
<dbReference type="CTD" id="84271"/>
<dbReference type="DisGeNET" id="84271"/>
<dbReference type="GeneCards" id="POLDIP3"/>
<dbReference type="HGNC" id="HGNC:23782">
    <property type="gene designation" value="POLDIP3"/>
</dbReference>
<dbReference type="HPA" id="ENSG00000100227">
    <property type="expression patterns" value="Low tissue specificity"/>
</dbReference>
<dbReference type="MIM" id="611520">
    <property type="type" value="gene"/>
</dbReference>
<dbReference type="neXtProt" id="NX_Q9BY77"/>
<dbReference type="OpenTargets" id="ENSG00000100227"/>
<dbReference type="PharmGKB" id="PA134899124"/>
<dbReference type="VEuPathDB" id="HostDB:ENSG00000100227"/>
<dbReference type="eggNOG" id="KOG0533">
    <property type="taxonomic scope" value="Eukaryota"/>
</dbReference>
<dbReference type="GeneTree" id="ENSGT00390000018868"/>
<dbReference type="HOGENOM" id="CLU_049890_0_0_1"/>
<dbReference type="InParanoid" id="Q9BY77"/>
<dbReference type="OMA" id="SNKRMMD"/>
<dbReference type="OrthoDB" id="346839at2759"/>
<dbReference type="PAN-GO" id="Q9BY77">
    <property type="GO annotations" value="4 GO annotations based on evolutionary models"/>
</dbReference>
<dbReference type="PhylomeDB" id="Q9BY77"/>
<dbReference type="TreeFam" id="TF313312"/>
<dbReference type="PathwayCommons" id="Q9BY77"/>
<dbReference type="Reactome" id="R-HSA-159236">
    <property type="pathway name" value="Transport of Mature mRNA derived from an Intron-Containing Transcript"/>
</dbReference>
<dbReference type="Reactome" id="R-HSA-72187">
    <property type="pathway name" value="mRNA 3'-end processing"/>
</dbReference>
<dbReference type="Reactome" id="R-HSA-73856">
    <property type="pathway name" value="RNA Polymerase II Transcription Termination"/>
</dbReference>
<dbReference type="SignaLink" id="Q9BY77"/>
<dbReference type="SIGNOR" id="Q9BY77"/>
<dbReference type="BioGRID-ORCS" id="84271">
    <property type="hits" value="18 hits in 1163 CRISPR screens"/>
</dbReference>
<dbReference type="CD-CODE" id="91857CE7">
    <property type="entry name" value="Nucleolus"/>
</dbReference>
<dbReference type="ChiTaRS" id="POLDIP3">
    <property type="organism name" value="human"/>
</dbReference>
<dbReference type="GeneWiki" id="POLDIP3"/>
<dbReference type="GenomeRNAi" id="84271"/>
<dbReference type="Pharos" id="Q9BY77">
    <property type="development level" value="Tbio"/>
</dbReference>
<dbReference type="PRO" id="PR:Q9BY77"/>
<dbReference type="Proteomes" id="UP000005640">
    <property type="component" value="Chromosome 22"/>
</dbReference>
<dbReference type="RNAct" id="Q9BY77">
    <property type="molecule type" value="protein"/>
</dbReference>
<dbReference type="Bgee" id="ENSG00000100227">
    <property type="expression patterns" value="Expressed in ventricular zone and 215 other cell types or tissues"/>
</dbReference>
<dbReference type="ExpressionAtlas" id="Q9BY77">
    <property type="expression patterns" value="baseline and differential"/>
</dbReference>
<dbReference type="GO" id="GO:0005737">
    <property type="term" value="C:cytoplasm"/>
    <property type="evidence" value="ECO:0000304"/>
    <property type="project" value="UniProtKB"/>
</dbReference>
<dbReference type="GO" id="GO:0036464">
    <property type="term" value="C:cytoplasmic ribonucleoprotein granule"/>
    <property type="evidence" value="ECO:0000314"/>
    <property type="project" value="HPA"/>
</dbReference>
<dbReference type="GO" id="GO:0005829">
    <property type="term" value="C:cytosol"/>
    <property type="evidence" value="ECO:0000304"/>
    <property type="project" value="Reactome"/>
</dbReference>
<dbReference type="GO" id="GO:0016607">
    <property type="term" value="C:nuclear speck"/>
    <property type="evidence" value="ECO:0000314"/>
    <property type="project" value="HPA"/>
</dbReference>
<dbReference type="GO" id="GO:0005654">
    <property type="term" value="C:nucleoplasm"/>
    <property type="evidence" value="ECO:0000304"/>
    <property type="project" value="Reactome"/>
</dbReference>
<dbReference type="GO" id="GO:0005634">
    <property type="term" value="C:nucleus"/>
    <property type="evidence" value="ECO:0000318"/>
    <property type="project" value="GO_Central"/>
</dbReference>
<dbReference type="GO" id="GO:0003729">
    <property type="term" value="F:mRNA binding"/>
    <property type="evidence" value="ECO:0000318"/>
    <property type="project" value="GO_Central"/>
</dbReference>
<dbReference type="GO" id="GO:0044877">
    <property type="term" value="F:protein-containing complex binding"/>
    <property type="evidence" value="ECO:0000353"/>
    <property type="project" value="UniProtKB"/>
</dbReference>
<dbReference type="GO" id="GO:0003723">
    <property type="term" value="F:RNA binding"/>
    <property type="evidence" value="ECO:0007005"/>
    <property type="project" value="UniProtKB"/>
</dbReference>
<dbReference type="GO" id="GO:0016973">
    <property type="term" value="P:poly(A)+ mRNA export from nucleus"/>
    <property type="evidence" value="ECO:0000314"/>
    <property type="project" value="UniProtKB"/>
</dbReference>
<dbReference type="GO" id="GO:0045727">
    <property type="term" value="P:positive regulation of translation"/>
    <property type="evidence" value="ECO:0000315"/>
    <property type="project" value="UniProtKB"/>
</dbReference>
<dbReference type="CDD" id="cd12681">
    <property type="entry name" value="RRM_SKAR"/>
    <property type="match status" value="1"/>
</dbReference>
<dbReference type="FunFam" id="3.30.70.330:FF:000243">
    <property type="entry name" value="DNA polymerase delta-interacting protein 3"/>
    <property type="match status" value="1"/>
</dbReference>
<dbReference type="Gene3D" id="3.30.70.330">
    <property type="match status" value="1"/>
</dbReference>
<dbReference type="InterPro" id="IPR051229">
    <property type="entry name" value="ALYREF_mRNA_export"/>
</dbReference>
<dbReference type="InterPro" id="IPR012677">
    <property type="entry name" value="Nucleotide-bd_a/b_plait_sf"/>
</dbReference>
<dbReference type="InterPro" id="IPR034784">
    <property type="entry name" value="PDIP3_RRM"/>
</dbReference>
<dbReference type="InterPro" id="IPR035979">
    <property type="entry name" value="RBD_domain_sf"/>
</dbReference>
<dbReference type="InterPro" id="IPR000504">
    <property type="entry name" value="RRM_dom"/>
</dbReference>
<dbReference type="PANTHER" id="PTHR19965:SF96">
    <property type="entry name" value="POLYMERASE DELTA-INTERACTING PROTEIN 3"/>
    <property type="match status" value="1"/>
</dbReference>
<dbReference type="PANTHER" id="PTHR19965">
    <property type="entry name" value="RNA AND EXPORT FACTOR BINDING PROTEIN"/>
    <property type="match status" value="1"/>
</dbReference>
<dbReference type="Pfam" id="PF00076">
    <property type="entry name" value="RRM_1"/>
    <property type="match status" value="1"/>
</dbReference>
<dbReference type="SMART" id="SM00360">
    <property type="entry name" value="RRM"/>
    <property type="match status" value="1"/>
</dbReference>
<dbReference type="SUPFAM" id="SSF54928">
    <property type="entry name" value="RNA-binding domain, RBD"/>
    <property type="match status" value="1"/>
</dbReference>
<dbReference type="PROSITE" id="PS50102">
    <property type="entry name" value="RRM"/>
    <property type="match status" value="1"/>
</dbReference>
<reference key="1">
    <citation type="journal article" date="2003" name="J. Biol. Chem.">
        <title>Identification of a novel protein, PDIP38, that interacts with the p50 subunit of DNA polymerase delta and proliferating cell nuclear antigen.</title>
        <authorList>
            <person name="Liu L."/>
            <person name="Rodriguez-Belmonte E.M."/>
            <person name="Mazloum N."/>
            <person name="Xie B."/>
            <person name="Lee M.Y.W.T."/>
        </authorList>
    </citation>
    <scope>NUCLEOTIDE SEQUENCE [GENOMIC DNA] (ISOFORM 1)</scope>
    <scope>INTERACTION WITH POLD2</scope>
</reference>
<reference key="2">
    <citation type="journal article" date="2001" name="DNA Res.">
        <title>Identification of novel transcribed sequences on human chromosome 22 by expressed sequence tag mapping.</title>
        <authorList>
            <person name="Hirosawa M."/>
            <person name="Nagase T."/>
            <person name="Murahashi Y."/>
            <person name="Kikuno R."/>
            <person name="Ohara O."/>
        </authorList>
    </citation>
    <scope>NUCLEOTIDE SEQUENCE [LARGE SCALE MRNA] (ISOFORM 1)</scope>
    <source>
        <tissue>Brain</tissue>
        <tissue>Placenta</tissue>
    </source>
</reference>
<reference key="3">
    <citation type="journal article" date="2003" name="Genome Res.">
        <title>Reevaluating human gene annotation: a second-generation analysis of chromosome 22.</title>
        <authorList>
            <person name="Collins J.E."/>
            <person name="Goward M.E."/>
            <person name="Cole C.G."/>
            <person name="Smink L.J."/>
            <person name="Huckle E.J."/>
            <person name="Knowles S."/>
            <person name="Bye J.M."/>
            <person name="Beare D.M."/>
            <person name="Dunham I."/>
        </authorList>
    </citation>
    <scope>NUCLEOTIDE SEQUENCE [LARGE SCALE MRNA] (ISOFORMS 1 AND 2)</scope>
</reference>
<reference key="4">
    <citation type="journal article" date="2004" name="Genome Biol.">
        <title>A genome annotation-driven approach to cloning the human ORFeome.</title>
        <authorList>
            <person name="Collins J.E."/>
            <person name="Wright C.L."/>
            <person name="Edwards C.A."/>
            <person name="Davis M.P."/>
            <person name="Grinham J.A."/>
            <person name="Cole C.G."/>
            <person name="Goward M.E."/>
            <person name="Aguado B."/>
            <person name="Mallya M."/>
            <person name="Mokrab Y."/>
            <person name="Huckle E.J."/>
            <person name="Beare D.M."/>
            <person name="Dunham I."/>
        </authorList>
    </citation>
    <scope>NUCLEOTIDE SEQUENCE [LARGE SCALE MRNA] (ISOFORM 1)</scope>
</reference>
<reference key="5">
    <citation type="journal article" date="2004" name="Nat. Genet.">
        <title>Complete sequencing and characterization of 21,243 full-length human cDNAs.</title>
        <authorList>
            <person name="Ota T."/>
            <person name="Suzuki Y."/>
            <person name="Nishikawa T."/>
            <person name="Otsuki T."/>
            <person name="Sugiyama T."/>
            <person name="Irie R."/>
            <person name="Wakamatsu A."/>
            <person name="Hayashi K."/>
            <person name="Sato H."/>
            <person name="Nagai K."/>
            <person name="Kimura K."/>
            <person name="Makita H."/>
            <person name="Sekine M."/>
            <person name="Obayashi M."/>
            <person name="Nishi T."/>
            <person name="Shibahara T."/>
            <person name="Tanaka T."/>
            <person name="Ishii S."/>
            <person name="Yamamoto J."/>
            <person name="Saito K."/>
            <person name="Kawai Y."/>
            <person name="Isono Y."/>
            <person name="Nakamura Y."/>
            <person name="Nagahari K."/>
            <person name="Murakami K."/>
            <person name="Yasuda T."/>
            <person name="Iwayanagi T."/>
            <person name="Wagatsuma M."/>
            <person name="Shiratori A."/>
            <person name="Sudo H."/>
            <person name="Hosoiri T."/>
            <person name="Kaku Y."/>
            <person name="Kodaira H."/>
            <person name="Kondo H."/>
            <person name="Sugawara M."/>
            <person name="Takahashi M."/>
            <person name="Kanda K."/>
            <person name="Yokoi T."/>
            <person name="Furuya T."/>
            <person name="Kikkawa E."/>
            <person name="Omura Y."/>
            <person name="Abe K."/>
            <person name="Kamihara K."/>
            <person name="Katsuta N."/>
            <person name="Sato K."/>
            <person name="Tanikawa M."/>
            <person name="Yamazaki M."/>
            <person name="Ninomiya K."/>
            <person name="Ishibashi T."/>
            <person name="Yamashita H."/>
            <person name="Murakawa K."/>
            <person name="Fujimori K."/>
            <person name="Tanai H."/>
            <person name="Kimata M."/>
            <person name="Watanabe M."/>
            <person name="Hiraoka S."/>
            <person name="Chiba Y."/>
            <person name="Ishida S."/>
            <person name="Ono Y."/>
            <person name="Takiguchi S."/>
            <person name="Watanabe S."/>
            <person name="Yosida M."/>
            <person name="Hotuta T."/>
            <person name="Kusano J."/>
            <person name="Kanehori K."/>
            <person name="Takahashi-Fujii A."/>
            <person name="Hara H."/>
            <person name="Tanase T.-O."/>
            <person name="Nomura Y."/>
            <person name="Togiya S."/>
            <person name="Komai F."/>
            <person name="Hara R."/>
            <person name="Takeuchi K."/>
            <person name="Arita M."/>
            <person name="Imose N."/>
            <person name="Musashino K."/>
            <person name="Yuuki H."/>
            <person name="Oshima A."/>
            <person name="Sasaki N."/>
            <person name="Aotsuka S."/>
            <person name="Yoshikawa Y."/>
            <person name="Matsunawa H."/>
            <person name="Ichihara T."/>
            <person name="Shiohata N."/>
            <person name="Sano S."/>
            <person name="Moriya S."/>
            <person name="Momiyama H."/>
            <person name="Satoh N."/>
            <person name="Takami S."/>
            <person name="Terashima Y."/>
            <person name="Suzuki O."/>
            <person name="Nakagawa S."/>
            <person name="Senoh A."/>
            <person name="Mizoguchi H."/>
            <person name="Goto Y."/>
            <person name="Shimizu F."/>
            <person name="Wakebe H."/>
            <person name="Hishigaki H."/>
            <person name="Watanabe T."/>
            <person name="Sugiyama A."/>
            <person name="Takemoto M."/>
            <person name="Kawakami B."/>
            <person name="Yamazaki M."/>
            <person name="Watanabe K."/>
            <person name="Kumagai A."/>
            <person name="Itakura S."/>
            <person name="Fukuzumi Y."/>
            <person name="Fujimori Y."/>
            <person name="Komiyama M."/>
            <person name="Tashiro H."/>
            <person name="Tanigami A."/>
            <person name="Fujiwara T."/>
            <person name="Ono T."/>
            <person name="Yamada K."/>
            <person name="Fujii Y."/>
            <person name="Ozaki K."/>
            <person name="Hirao M."/>
            <person name="Ohmori Y."/>
            <person name="Kawabata A."/>
            <person name="Hikiji T."/>
            <person name="Kobatake N."/>
            <person name="Inagaki H."/>
            <person name="Ikema Y."/>
            <person name="Okamoto S."/>
            <person name="Okitani R."/>
            <person name="Kawakami T."/>
            <person name="Noguchi S."/>
            <person name="Itoh T."/>
            <person name="Shigeta K."/>
            <person name="Senba T."/>
            <person name="Matsumura K."/>
            <person name="Nakajima Y."/>
            <person name="Mizuno T."/>
            <person name="Morinaga M."/>
            <person name="Sasaki M."/>
            <person name="Togashi T."/>
            <person name="Oyama M."/>
            <person name="Hata H."/>
            <person name="Watanabe M."/>
            <person name="Komatsu T."/>
            <person name="Mizushima-Sugano J."/>
            <person name="Satoh T."/>
            <person name="Shirai Y."/>
            <person name="Takahashi Y."/>
            <person name="Nakagawa K."/>
            <person name="Okumura K."/>
            <person name="Nagase T."/>
            <person name="Nomura N."/>
            <person name="Kikuchi H."/>
            <person name="Masuho Y."/>
            <person name="Yamashita R."/>
            <person name="Nakai K."/>
            <person name="Yada T."/>
            <person name="Nakamura Y."/>
            <person name="Ohara O."/>
            <person name="Isogai T."/>
            <person name="Sugano S."/>
        </authorList>
    </citation>
    <scope>NUCLEOTIDE SEQUENCE [LARGE SCALE MRNA] (ISOFORMS 1 AND 2)</scope>
    <source>
        <tissue>Placenta</tissue>
    </source>
</reference>
<reference key="6">
    <citation type="journal article" date="1999" name="Nature">
        <title>The DNA sequence of human chromosome 22.</title>
        <authorList>
            <person name="Dunham I."/>
            <person name="Hunt A.R."/>
            <person name="Collins J.E."/>
            <person name="Bruskiewich R."/>
            <person name="Beare D.M."/>
            <person name="Clamp M."/>
            <person name="Smink L.J."/>
            <person name="Ainscough R."/>
            <person name="Almeida J.P."/>
            <person name="Babbage A.K."/>
            <person name="Bagguley C."/>
            <person name="Bailey J."/>
            <person name="Barlow K.F."/>
            <person name="Bates K.N."/>
            <person name="Beasley O.P."/>
            <person name="Bird C.P."/>
            <person name="Blakey S.E."/>
            <person name="Bridgeman A.M."/>
            <person name="Buck D."/>
            <person name="Burgess J."/>
            <person name="Burrill W.D."/>
            <person name="Burton J."/>
            <person name="Carder C."/>
            <person name="Carter N.P."/>
            <person name="Chen Y."/>
            <person name="Clark G."/>
            <person name="Clegg S.M."/>
            <person name="Cobley V.E."/>
            <person name="Cole C.G."/>
            <person name="Collier R.E."/>
            <person name="Connor R."/>
            <person name="Conroy D."/>
            <person name="Corby N.R."/>
            <person name="Coville G.J."/>
            <person name="Cox A.V."/>
            <person name="Davis J."/>
            <person name="Dawson E."/>
            <person name="Dhami P.D."/>
            <person name="Dockree C."/>
            <person name="Dodsworth S.J."/>
            <person name="Durbin R.M."/>
            <person name="Ellington A.G."/>
            <person name="Evans K.L."/>
            <person name="Fey J.M."/>
            <person name="Fleming K."/>
            <person name="French L."/>
            <person name="Garner A.A."/>
            <person name="Gilbert J.G.R."/>
            <person name="Goward M.E."/>
            <person name="Grafham D.V."/>
            <person name="Griffiths M.N.D."/>
            <person name="Hall C."/>
            <person name="Hall R.E."/>
            <person name="Hall-Tamlyn G."/>
            <person name="Heathcott R.W."/>
            <person name="Ho S."/>
            <person name="Holmes S."/>
            <person name="Hunt S.E."/>
            <person name="Jones M.C."/>
            <person name="Kershaw J."/>
            <person name="Kimberley A.M."/>
            <person name="King A."/>
            <person name="Laird G.K."/>
            <person name="Langford C.F."/>
            <person name="Leversha M.A."/>
            <person name="Lloyd C."/>
            <person name="Lloyd D.M."/>
            <person name="Martyn I.D."/>
            <person name="Mashreghi-Mohammadi M."/>
            <person name="Matthews L.H."/>
            <person name="Mccann O.T."/>
            <person name="Mcclay J."/>
            <person name="Mclaren S."/>
            <person name="McMurray A.A."/>
            <person name="Milne S.A."/>
            <person name="Mortimore B.J."/>
            <person name="Odell C.N."/>
            <person name="Pavitt R."/>
            <person name="Pearce A.V."/>
            <person name="Pearson D."/>
            <person name="Phillimore B.J.C.T."/>
            <person name="Phillips S.H."/>
            <person name="Plumb R.W."/>
            <person name="Ramsay H."/>
            <person name="Ramsey Y."/>
            <person name="Rogers L."/>
            <person name="Ross M.T."/>
            <person name="Scott C.E."/>
            <person name="Sehra H.K."/>
            <person name="Skuce C.D."/>
            <person name="Smalley S."/>
            <person name="Smith M.L."/>
            <person name="Soderlund C."/>
            <person name="Spragon L."/>
            <person name="Steward C.A."/>
            <person name="Sulston J.E."/>
            <person name="Swann R.M."/>
            <person name="Vaudin M."/>
            <person name="Wall M."/>
            <person name="Wallis J.M."/>
            <person name="Whiteley M.N."/>
            <person name="Willey D.L."/>
            <person name="Williams L."/>
            <person name="Williams S.A."/>
            <person name="Williamson H."/>
            <person name="Wilmer T.E."/>
            <person name="Wilming L."/>
            <person name="Wright C.L."/>
            <person name="Hubbard T."/>
            <person name="Bentley D.R."/>
            <person name="Beck S."/>
            <person name="Rogers J."/>
            <person name="Shimizu N."/>
            <person name="Minoshima S."/>
            <person name="Kawasaki K."/>
            <person name="Sasaki T."/>
            <person name="Asakawa S."/>
            <person name="Kudoh J."/>
            <person name="Shintani A."/>
            <person name="Shibuya K."/>
            <person name="Yoshizaki Y."/>
            <person name="Aoki N."/>
            <person name="Mitsuyama S."/>
            <person name="Roe B.A."/>
            <person name="Chen F."/>
            <person name="Chu L."/>
            <person name="Crabtree J."/>
            <person name="Deschamps S."/>
            <person name="Do A."/>
            <person name="Do T."/>
            <person name="Dorman A."/>
            <person name="Fang F."/>
            <person name="Fu Y."/>
            <person name="Hu P."/>
            <person name="Hua A."/>
            <person name="Kenton S."/>
            <person name="Lai H."/>
            <person name="Lao H.I."/>
            <person name="Lewis J."/>
            <person name="Lewis S."/>
            <person name="Lin S.-P."/>
            <person name="Loh P."/>
            <person name="Malaj E."/>
            <person name="Nguyen T."/>
            <person name="Pan H."/>
            <person name="Phan S."/>
            <person name="Qi S."/>
            <person name="Qian Y."/>
            <person name="Ray L."/>
            <person name="Ren Q."/>
            <person name="Shaull S."/>
            <person name="Sloan D."/>
            <person name="Song L."/>
            <person name="Wang Q."/>
            <person name="Wang Y."/>
            <person name="Wang Z."/>
            <person name="White J."/>
            <person name="Willingham D."/>
            <person name="Wu H."/>
            <person name="Yao Z."/>
            <person name="Zhan M."/>
            <person name="Zhang G."/>
            <person name="Chissoe S."/>
            <person name="Murray J."/>
            <person name="Miller N."/>
            <person name="Minx P."/>
            <person name="Fulton R."/>
            <person name="Johnson D."/>
            <person name="Bemis G."/>
            <person name="Bentley D."/>
            <person name="Bradshaw H."/>
            <person name="Bourne S."/>
            <person name="Cordes M."/>
            <person name="Du Z."/>
            <person name="Fulton L."/>
            <person name="Goela D."/>
            <person name="Graves T."/>
            <person name="Hawkins J."/>
            <person name="Hinds K."/>
            <person name="Kemp K."/>
            <person name="Latreille P."/>
            <person name="Layman D."/>
            <person name="Ozersky P."/>
            <person name="Rohlfing T."/>
            <person name="Scheet P."/>
            <person name="Walker C."/>
            <person name="Wamsley A."/>
            <person name="Wohldmann P."/>
            <person name="Pepin K."/>
            <person name="Nelson J."/>
            <person name="Korf I."/>
            <person name="Bedell J.A."/>
            <person name="Hillier L.W."/>
            <person name="Mardis E."/>
            <person name="Waterston R."/>
            <person name="Wilson R."/>
            <person name="Emanuel B.S."/>
            <person name="Shaikh T."/>
            <person name="Kurahashi H."/>
            <person name="Saitta S."/>
            <person name="Budarf M.L."/>
            <person name="McDermid H.E."/>
            <person name="Johnson A."/>
            <person name="Wong A.C.C."/>
            <person name="Morrow B.E."/>
            <person name="Edelmann L."/>
            <person name="Kim U.J."/>
            <person name="Shizuya H."/>
            <person name="Simon M.I."/>
            <person name="Dumanski J.P."/>
            <person name="Peyrard M."/>
            <person name="Kedra D."/>
            <person name="Seroussi E."/>
            <person name="Fransson I."/>
            <person name="Tapia I."/>
            <person name="Bruder C.E."/>
            <person name="O'Brien K.P."/>
            <person name="Wilkinson P."/>
            <person name="Bodenteich A."/>
            <person name="Hartman K."/>
            <person name="Hu X."/>
            <person name="Khan A.S."/>
            <person name="Lane L."/>
            <person name="Tilahun Y."/>
            <person name="Wright H."/>
        </authorList>
    </citation>
    <scope>NUCLEOTIDE SEQUENCE [LARGE SCALE GENOMIC DNA]</scope>
</reference>
<reference key="7">
    <citation type="journal article" date="2004" name="Genome Res.">
        <title>The status, quality, and expansion of the NIH full-length cDNA project: the Mammalian Gene Collection (MGC).</title>
        <authorList>
            <consortium name="The MGC Project Team"/>
        </authorList>
    </citation>
    <scope>NUCLEOTIDE SEQUENCE [LARGE SCALE MRNA] (ISOFORMS 1 AND 2)</scope>
    <source>
        <tissue>Brain</tissue>
    </source>
</reference>
<reference key="8">
    <citation type="submission" date="2008-12" db="UniProtKB">
        <authorList>
            <person name="Bienvenut W.V."/>
            <person name="Lilla S."/>
            <person name="von Kriegsheim A."/>
            <person name="Lempens A."/>
            <person name="Kolch W."/>
        </authorList>
    </citation>
    <scope>PROTEIN SEQUENCE OF 2-11; 34-46; 148-155; 311-323 AND 405-418</scope>
    <scope>CLEAVAGE OF INITIATOR METHIONINE</scope>
    <scope>ACETYLATION AT ALA-2</scope>
    <scope>IDENTIFICATION BY MASS SPECTROMETRY</scope>
    <source>
        <tissue>Ovarian carcinoma</tissue>
    </source>
</reference>
<reference key="9">
    <citation type="journal article" date="2008" name="Cell">
        <title>SKAR links pre-mRNA splicing to mTOR/S6K1-mediated enhanced translation efficiency of spliced mRNAs.</title>
        <authorList>
            <person name="Ma X.M."/>
            <person name="Yoon S.O."/>
            <person name="Richardson C.J."/>
            <person name="Julich K."/>
            <person name="Blenis J."/>
        </authorList>
    </citation>
    <scope>NUCLEOTIDE SEQUENCE [MRNA] OF 259-421</scope>
    <scope>FUNCTION</scope>
    <scope>SUBCELLULAR LOCATION</scope>
    <scope>INTERACTION WITH NCBP1 AND EIF4A3</scope>
</reference>
<reference key="10">
    <citation type="journal article" date="2004" name="Curr. Biol.">
        <title>SKAR is a specific target of S6 kinase 1 in cell growth control.</title>
        <authorList>
            <person name="Richardson C.J."/>
            <person name="Broenstrup M."/>
            <person name="Fingar D.C."/>
            <person name="Julich K."/>
            <person name="Ballif B.A."/>
            <person name="Gygi S."/>
            <person name="Blenis J."/>
        </authorList>
    </citation>
    <scope>INTERACTION WITH RPS6KB1</scope>
    <scope>SUBCELLULAR LOCATION</scope>
    <scope>PHOSPHORYLATION AT SER-127; SER-275; SER-383 AND SER-385</scope>
    <scope>MUTAGENESIS OF SER-383 AND SER-385</scope>
    <scope>IDENTIFICATION BY MASS SPECTROMETRY</scope>
</reference>
<reference key="11">
    <citation type="journal article" date="2006" name="FEBS J.">
        <title>Human enhancer of rudimentary is a molecular partner of PDIP46/SKAR, a protein interacting with DNA polymerase delta and S6K1 and regulating cell growth.</title>
        <authorList>
            <person name="Smyk A."/>
            <person name="Szuminska M."/>
            <person name="Uniewicz K.A."/>
            <person name="Graves L.M."/>
            <person name="Kozlowski P."/>
        </authorList>
    </citation>
    <scope>INTERACTION WITH ERH</scope>
    <scope>SUBCELLULAR LOCATION</scope>
    <scope>IDENTIFICATION BY MASS SPECTROMETRY</scope>
</reference>
<reference key="12">
    <citation type="journal article" date="2007" name="J. Proteome Res.">
        <title>Improved titanium dioxide enrichment of phosphopeptides from HeLa cells and high confident phosphopeptide identification by cross-validation of MS/MS and MS/MS/MS spectra.</title>
        <authorList>
            <person name="Yu L.R."/>
            <person name="Zhu Z."/>
            <person name="Chan K.C."/>
            <person name="Issaq H.J."/>
            <person name="Dimitrov D.S."/>
            <person name="Veenstra T.D."/>
        </authorList>
    </citation>
    <scope>IDENTIFICATION BY MASS SPECTROMETRY [LARGE SCALE ANALYSIS]</scope>
    <source>
        <tissue>Cervix carcinoma</tissue>
    </source>
</reference>
<reference key="13">
    <citation type="journal article" date="2007" name="Science">
        <title>ATM and ATR substrate analysis reveals extensive protein networks responsive to DNA damage.</title>
        <authorList>
            <person name="Matsuoka S."/>
            <person name="Ballif B.A."/>
            <person name="Smogorzewska A."/>
            <person name="McDonald E.R. III"/>
            <person name="Hurov K.E."/>
            <person name="Luo J."/>
            <person name="Bakalarski C.E."/>
            <person name="Zhao Z."/>
            <person name="Solimini N."/>
            <person name="Lerenthal Y."/>
            <person name="Shiloh Y."/>
            <person name="Gygi S.P."/>
            <person name="Elledge S.J."/>
        </authorList>
    </citation>
    <scope>IDENTIFICATION BY MASS SPECTROMETRY [LARGE SCALE ANALYSIS]</scope>
    <source>
        <tissue>Embryonic kidney</tissue>
    </source>
</reference>
<reference key="14">
    <citation type="journal article" date="2008" name="Proc. Natl. Acad. Sci. U.S.A.">
        <title>A quantitative atlas of mitotic phosphorylation.</title>
        <authorList>
            <person name="Dephoure N."/>
            <person name="Zhou C."/>
            <person name="Villen J."/>
            <person name="Beausoleil S.A."/>
            <person name="Bakalarski C.E."/>
            <person name="Elledge S.J."/>
            <person name="Gygi S.P."/>
        </authorList>
    </citation>
    <scope>IDENTIFICATION BY MASS SPECTROMETRY [LARGE SCALE ANALYSIS]</scope>
    <source>
        <tissue>Cervix carcinoma</tissue>
    </source>
</reference>
<reference key="15">
    <citation type="journal article" date="2009" name="Sci. Signal.">
        <title>Quantitative phosphoproteomic analysis of T cell receptor signaling reveals system-wide modulation of protein-protein interactions.</title>
        <authorList>
            <person name="Mayya V."/>
            <person name="Lundgren D.H."/>
            <person name="Hwang S.-I."/>
            <person name="Rezaul K."/>
            <person name="Wu L."/>
            <person name="Eng J.K."/>
            <person name="Rodionov V."/>
            <person name="Han D.K."/>
        </authorList>
    </citation>
    <scope>PHOSPHORYLATION [LARGE SCALE ANALYSIS] AT THR-140</scope>
    <scope>IDENTIFICATION BY MASS SPECTROMETRY [LARGE SCALE ANALYSIS]</scope>
    <source>
        <tissue>Leukemic T-cell</tissue>
    </source>
</reference>
<reference key="16">
    <citation type="journal article" date="2010" name="Genes Dev.">
        <title>ATP is required for interactions between UAP56 and two conserved mRNA export proteins, Aly and CIP29, to assemble the TREX complex.</title>
        <authorList>
            <person name="Dufu K."/>
            <person name="Livingstone M.J."/>
            <person name="Seebacher J."/>
            <person name="Gygi S.P."/>
            <person name="Wilson S.A."/>
            <person name="Reed R."/>
        </authorList>
    </citation>
    <scope>ASSOCIATION WITH THE TREX COMPLEX</scope>
</reference>
<reference key="17">
    <citation type="journal article" date="2010" name="Sci. Signal.">
        <title>Quantitative phosphoproteomics reveals widespread full phosphorylation site occupancy during mitosis.</title>
        <authorList>
            <person name="Olsen J.V."/>
            <person name="Vermeulen M."/>
            <person name="Santamaria A."/>
            <person name="Kumar C."/>
            <person name="Miller M.L."/>
            <person name="Jensen L.J."/>
            <person name="Gnad F."/>
            <person name="Cox J."/>
            <person name="Jensen T.S."/>
            <person name="Nigg E.A."/>
            <person name="Brunak S."/>
            <person name="Mann M."/>
        </authorList>
    </citation>
    <scope>ACETYLATION [LARGE SCALE ANALYSIS] AT ALA-2</scope>
    <scope>PHOSPHORYLATION [LARGE SCALE ANALYSIS] AT SER-5; SER-127 AND SER-275</scope>
    <scope>CLEAVAGE OF INITIATOR METHIONINE [LARGE SCALE ANALYSIS]</scope>
    <scope>IDENTIFICATION BY MASS SPECTROMETRY [LARGE SCALE ANALYSIS]</scope>
    <source>
        <tissue>Cervix carcinoma</tissue>
    </source>
</reference>
<reference key="18">
    <citation type="journal article" date="2011" name="BMC Syst. Biol.">
        <title>Initial characterization of the human central proteome.</title>
        <authorList>
            <person name="Burkard T.R."/>
            <person name="Planyavsky M."/>
            <person name="Kaupe I."/>
            <person name="Breitwieser F.P."/>
            <person name="Buerckstuemmer T."/>
            <person name="Bennett K.L."/>
            <person name="Superti-Furga G."/>
            <person name="Colinge J."/>
        </authorList>
    </citation>
    <scope>IDENTIFICATION BY MASS SPECTROMETRY [LARGE SCALE ANALYSIS]</scope>
</reference>
<reference key="19">
    <citation type="journal article" date="2012" name="Mol. Cell. Proteomics">
        <title>Comparative large-scale characterisation of plant vs. mammal proteins reveals similar and idiosyncratic N-alpha acetylation features.</title>
        <authorList>
            <person name="Bienvenut W.V."/>
            <person name="Sumpton D."/>
            <person name="Martinez A."/>
            <person name="Lilla S."/>
            <person name="Espagne C."/>
            <person name="Meinnel T."/>
            <person name="Giglione C."/>
        </authorList>
    </citation>
    <scope>ACETYLATION [LARGE SCALE ANALYSIS] AT ALA-2</scope>
    <scope>CLEAVAGE OF INITIATOR METHIONINE [LARGE SCALE ANALYSIS]</scope>
    <scope>IDENTIFICATION BY MASS SPECTROMETRY [LARGE SCALE ANALYSIS]</scope>
</reference>
<reference key="20">
    <citation type="journal article" date="2012" name="PLoS ONE">
        <title>The proteins PDIP3 and ZC11A associate with the human TREX complex in an ATP-dependent manner and function in mRNA export.</title>
        <authorList>
            <person name="Folco E.G."/>
            <person name="Lee C.S."/>
            <person name="Dufu K."/>
            <person name="Yamazaki T."/>
            <person name="Reed R."/>
        </authorList>
    </citation>
    <scope>FUNCTION</scope>
    <scope>SUBCELLULAR LOCATION</scope>
    <scope>INTERACTION WITH THOC2; DDX39B AND ZC3H11A</scope>
    <scope>ASSOCIATION WITH THE TREX COMPLEX</scope>
</reference>
<reference key="21">
    <citation type="journal article" date="2012" name="Proc. Natl. Acad. Sci. U.S.A.">
        <title>N-terminal acetylome analyses and functional insights of the N-terminal acetyltransferase NatB.</title>
        <authorList>
            <person name="Van Damme P."/>
            <person name="Lasa M."/>
            <person name="Polevoda B."/>
            <person name="Gazquez C."/>
            <person name="Elosegui-Artola A."/>
            <person name="Kim D.S."/>
            <person name="De Juan-Pardo E."/>
            <person name="Demeyer K."/>
            <person name="Hole K."/>
            <person name="Larrea E."/>
            <person name="Timmerman E."/>
            <person name="Prieto J."/>
            <person name="Arnesen T."/>
            <person name="Sherman F."/>
            <person name="Gevaert K."/>
            <person name="Aldabe R."/>
        </authorList>
    </citation>
    <scope>ACETYLATION [LARGE SCALE ANALYSIS] AT ALA-2</scope>
    <scope>CLEAVAGE OF INITIATOR METHIONINE [LARGE SCALE ANALYSIS]</scope>
    <scope>IDENTIFICATION BY MASS SPECTROMETRY [LARGE SCALE ANALYSIS]</scope>
</reference>
<reference key="22">
    <citation type="journal article" date="2013" name="J. Proteome Res.">
        <title>Toward a comprehensive characterization of a human cancer cell phosphoproteome.</title>
        <authorList>
            <person name="Zhou H."/>
            <person name="Di Palma S."/>
            <person name="Preisinger C."/>
            <person name="Peng M."/>
            <person name="Polat A.N."/>
            <person name="Heck A.J."/>
            <person name="Mohammed S."/>
        </authorList>
    </citation>
    <scope>PHOSPHORYLATION [LARGE SCALE ANALYSIS] AT SER-5; SER-44; SER-127; SER-204; SER-215; SER-217; SER-244 AND SER-275</scope>
    <scope>IDENTIFICATION BY MASS SPECTROMETRY [LARGE SCALE ANALYSIS]</scope>
    <source>
        <tissue>Cervix carcinoma</tissue>
        <tissue>Erythroleukemia</tissue>
    </source>
</reference>
<reference key="23">
    <citation type="journal article" date="2014" name="J. Proteomics">
        <title>An enzyme assisted RP-RPLC approach for in-depth analysis of human liver phosphoproteome.</title>
        <authorList>
            <person name="Bian Y."/>
            <person name="Song C."/>
            <person name="Cheng K."/>
            <person name="Dong M."/>
            <person name="Wang F."/>
            <person name="Huang J."/>
            <person name="Sun D."/>
            <person name="Wang L."/>
            <person name="Ye M."/>
            <person name="Zou H."/>
        </authorList>
    </citation>
    <scope>IDENTIFICATION BY MASS SPECTROMETRY [LARGE SCALE ANALYSIS]</scope>
    <source>
        <tissue>Liver</tissue>
    </source>
</reference>
<reference key="24">
    <citation type="journal article" date="2014" name="Mol. Cell. Proteomics">
        <title>Immunoaffinity enrichment and mass spectrometry analysis of protein methylation.</title>
        <authorList>
            <person name="Guo A."/>
            <person name="Gu H."/>
            <person name="Zhou J."/>
            <person name="Mulhern D."/>
            <person name="Wang Y."/>
            <person name="Lee K.A."/>
            <person name="Yang V."/>
            <person name="Aguiar M."/>
            <person name="Kornhauser J."/>
            <person name="Jia X."/>
            <person name="Ren J."/>
            <person name="Beausoleil S.A."/>
            <person name="Silva J.C."/>
            <person name="Vemulapalli V."/>
            <person name="Bedford M.T."/>
            <person name="Comb M.J."/>
        </authorList>
    </citation>
    <scope>METHYLATION [LARGE SCALE ANALYSIS] AT ARG-33</scope>
    <scope>IDENTIFICATION BY MASS SPECTROMETRY [LARGE SCALE ANALYSIS]</scope>
    <source>
        <tissue>Colon carcinoma</tissue>
    </source>
</reference>
<reference key="25">
    <citation type="journal article" date="2015" name="Mol. Cell. Proteomics">
        <title>System-wide analysis of SUMOylation dynamics in response to replication stress reveals novel small ubiquitin-like modified target proteins and acceptor lysines relevant for genome stability.</title>
        <authorList>
            <person name="Xiao Z."/>
            <person name="Chang J.G."/>
            <person name="Hendriks I.A."/>
            <person name="Sigurdsson J.O."/>
            <person name="Olsen J.V."/>
            <person name="Vertegaal A.C."/>
        </authorList>
    </citation>
    <scope>SUMOYLATION [LARGE SCALE ANALYSIS] AT LYS-372</scope>
    <scope>IDENTIFICATION BY MASS SPECTROMETRY [LARGE SCALE ANALYSIS]</scope>
</reference>
<reference key="26">
    <citation type="journal article" date="2017" name="Nat. Struct. Mol. Biol.">
        <title>Site-specific mapping of the human SUMO proteome reveals co-modification with phosphorylation.</title>
        <authorList>
            <person name="Hendriks I.A."/>
            <person name="Lyon D."/>
            <person name="Young C."/>
            <person name="Jensen L.J."/>
            <person name="Vertegaal A.C."/>
            <person name="Nielsen M.L."/>
        </authorList>
    </citation>
    <scope>SUMOYLATION [LARGE SCALE ANALYSIS] AT LYS-200; LYS-223; LYS-248; LYS-372 AND LYS-418</scope>
    <scope>IDENTIFICATION BY MASS SPECTROMETRY [LARGE SCALE ANALYSIS]</scope>
</reference>
<name>PDIP3_HUMAN</name>
<comment type="function">
    <text evidence="6 7">Is involved in regulation of translation. Is preferentially associated with CBC-bound spliced mRNA-protein complexes during the pioneer round of mRNA translation. Contributes to enhanced translational efficiency of spliced over nonspliced mRNAs. Recruits activated ribosomal protein S6 kinase beta-1 I/RPS6KB1 to newly synthesized mRNA. Involved in nuclear mRNA export; probably mediated by association with the TREX complex.</text>
</comment>
<comment type="subunit">
    <text evidence="3 4 5 6 7">Interacts with POLD2. Interacts with NCBP1 and EIF4A3. Associates with the multiprotein exon junction complex (EJC). Interacts with RPS6KB1 (activated). Interacts with ERH. Interacts with THOC2, DDX39B and ZC3H11A; the interactions are ATP-dependent and indicative for an association with the TREX complex.</text>
</comment>
<comment type="interaction">
    <interactant intactId="EBI-1776152">
        <id>Q9BY77</id>
    </interactant>
    <interactant intactId="EBI-464743">
        <id>Q09161</id>
        <label>NCBP1</label>
    </interactant>
    <organismsDiffer>false</organismsDiffer>
    <experiments>3</experiments>
</comment>
<comment type="interaction">
    <interactant intactId="EBI-1776152">
        <id>Q9BY77</id>
    </interactant>
    <interactant intactId="EBI-711736">
        <id>Q8IWV7</id>
        <label>UBR1</label>
    </interactant>
    <organismsDiffer>false</organismsDiffer>
    <experiments>2</experiments>
</comment>
<comment type="subcellular location">
    <subcellularLocation>
        <location>Nucleus</location>
    </subcellularLocation>
    <subcellularLocation>
        <location>Nucleus speckle</location>
    </subcellularLocation>
    <subcellularLocation>
        <location>Cytoplasm</location>
    </subcellularLocation>
    <text>Nucleocytoplasmic shuttling protein.</text>
</comment>
<comment type="alternative products">
    <event type="alternative splicing"/>
    <isoform>
        <id>Q9BY77-1</id>
        <name>1</name>
        <sequence type="displayed"/>
    </isoform>
    <isoform>
        <id>Q9BY77-2</id>
        <name>2</name>
        <sequence type="described" ref="VSP_011056"/>
    </isoform>
</comment>
<comment type="PTM">
    <text evidence="4">Phosphorylated at Ser-383 and Ser-385 by RPS6KB1.</text>
</comment>
<comment type="sequence caution" evidence="12">
    <conflict type="erroneous initiation">
        <sequence resource="EMBL-CDS" id="BAB33368"/>
    </conflict>
</comment>